<evidence type="ECO:0000255" key="1">
    <source>
        <dbReference type="PROSITE-ProRule" id="PRU00978"/>
    </source>
</evidence>
<evidence type="ECO:0000256" key="2">
    <source>
        <dbReference type="SAM" id="MobiDB-lite"/>
    </source>
</evidence>
<evidence type="ECO:0000269" key="3">
    <source>
    </source>
</evidence>
<evidence type="ECO:0000269" key="4">
    <source>
    </source>
</evidence>
<evidence type="ECO:0000269" key="5">
    <source>
    </source>
</evidence>
<evidence type="ECO:0000303" key="6">
    <source>
    </source>
</evidence>
<evidence type="ECO:0000303" key="7">
    <source ref="4"/>
</evidence>
<evidence type="ECO:0000305" key="8"/>
<gene>
    <name evidence="6" type="primary">BZIP34</name>
    <name type="ordered locus">At2g42380</name>
    <name type="ORF">MHK10.10</name>
</gene>
<name>BZP34_ARATH</name>
<keyword id="KW-0010">Activator</keyword>
<keyword id="KW-0025">Alternative splicing</keyword>
<keyword id="KW-0238">DNA-binding</keyword>
<keyword id="KW-0539">Nucleus</keyword>
<keyword id="KW-1185">Reference proteome</keyword>
<keyword id="KW-0804">Transcription</keyword>
<keyword id="KW-0805">Transcription regulation</keyword>
<sequence>MAQLPPKIPNMTQHWPDFSSQKLSPFSTPTATAVATATTTVQNPSWVDEFLDFSASRRGNHRRSISDSIAFLEAPTVSIEDHQFDRFDDEQFMSMFTDDDNLHSNPSHINNKNNNVGPTGSSSNTSTPSNSFNDDNKELPPSDHNMNNNINNNYNDEVQSQCKMEPEDGTASNNNSGDSSGNRILDPKRVKRILANRQSAQRSRVRKLQYISELERSVTSLQAEVSVLSPRVAFLDHQRLLLNVDNSALKQRIAALSQDKLFKDAHQEALKREIERLRQVYNQQSLTNVENANHLSATGAGATPAVDIKSSVETEQLLNVS</sequence>
<organism>
    <name type="scientific">Arabidopsis thaliana</name>
    <name type="common">Mouse-ear cress</name>
    <dbReference type="NCBI Taxonomy" id="3702"/>
    <lineage>
        <taxon>Eukaryota</taxon>
        <taxon>Viridiplantae</taxon>
        <taxon>Streptophyta</taxon>
        <taxon>Embryophyta</taxon>
        <taxon>Tracheophyta</taxon>
        <taxon>Spermatophyta</taxon>
        <taxon>Magnoliopsida</taxon>
        <taxon>eudicotyledons</taxon>
        <taxon>Gunneridae</taxon>
        <taxon>Pentapetalae</taxon>
        <taxon>rosids</taxon>
        <taxon>malvids</taxon>
        <taxon>Brassicales</taxon>
        <taxon>Brassicaceae</taxon>
        <taxon>Camelineae</taxon>
        <taxon>Arabidopsis</taxon>
    </lineage>
</organism>
<comment type="function">
    <text evidence="3 4">Transcriptional activator involved in the sporophytic control of cell wall patterning and gametophytic control of pollen development. May play a role in the control of metabolic pathways regulating cellular transport and lipid metabolism.</text>
</comment>
<comment type="subunit">
    <text evidence="3 5">Forms heterodimers with BZIP18, BZIP43 and VIP1/BZIP51.</text>
</comment>
<comment type="subcellular location">
    <subcellularLocation>
        <location evidence="1 3">Nucleus</location>
    </subcellularLocation>
</comment>
<comment type="alternative products">
    <event type="alternative splicing"/>
    <isoform>
        <id>F4IN23-1</id>
        <name>1</name>
        <sequence type="displayed"/>
    </isoform>
    <isoform>
        <id>F4IN23-2</id>
        <name>2</name>
        <sequence type="described" ref="VSP_056619"/>
    </isoform>
</comment>
<comment type="tissue specificity">
    <text evidence="4">Expressed in vascular tissues of leaves, stems and siliques, anthers, filaments, tapetum, mature pollen grains, pistil vascular tissues and papillar cells, and funiculi.</text>
</comment>
<comment type="disruption phenotype">
    <text evidence="4">Pollen morphological defects, reduced pollen germination efficiency and pollen tube growth.</text>
</comment>
<comment type="sequence caution" evidence="8">
    <conflict type="erroneous initiation">
        <sequence resource="EMBL-CDS" id="AAD23721"/>
    </conflict>
    <text>Truncated N-terminus.</text>
</comment>
<comment type="sequence caution" evidence="8">
    <conflict type="erroneous initiation">
        <sequence resource="EMBL-CDS" id="AAL69473"/>
    </conflict>
    <text>Truncated N-terminus.</text>
</comment>
<dbReference type="EMBL" id="AC005956">
    <property type="protein sequence ID" value="AAD23721.1"/>
    <property type="status" value="ALT_INIT"/>
    <property type="molecule type" value="Genomic_DNA"/>
</dbReference>
<dbReference type="EMBL" id="CP002685">
    <property type="protein sequence ID" value="AEC10113.1"/>
    <property type="molecule type" value="Genomic_DNA"/>
</dbReference>
<dbReference type="EMBL" id="CP002685">
    <property type="protein sequence ID" value="AEC10114.1"/>
    <property type="molecule type" value="Genomic_DNA"/>
</dbReference>
<dbReference type="EMBL" id="AY074657">
    <property type="protein sequence ID" value="AAL69473.1"/>
    <property type="status" value="ALT_INIT"/>
    <property type="molecule type" value="mRNA"/>
</dbReference>
<dbReference type="EMBL" id="AF401299">
    <property type="protein sequence ID" value="AAK84222.1"/>
    <property type="molecule type" value="mRNA"/>
</dbReference>
<dbReference type="PIR" id="C84853">
    <property type="entry name" value="C84853"/>
</dbReference>
<dbReference type="RefSeq" id="NP_565970.2">
    <molecule id="F4IN23-2"/>
    <property type="nucleotide sequence ID" value="NM_129800.2"/>
</dbReference>
<dbReference type="RefSeq" id="NP_850369.1">
    <molecule id="F4IN23-1"/>
    <property type="nucleotide sequence ID" value="NM_180038.2"/>
</dbReference>
<dbReference type="SMR" id="F4IN23"/>
<dbReference type="BioGRID" id="4176">
    <property type="interactions" value="4"/>
</dbReference>
<dbReference type="FunCoup" id="F4IN23">
    <property type="interactions" value="55"/>
</dbReference>
<dbReference type="IntAct" id="F4IN23">
    <property type="interactions" value="3"/>
</dbReference>
<dbReference type="STRING" id="3702.F4IN23"/>
<dbReference type="GlyGen" id="F4IN23">
    <property type="glycosylation" value="3 sites"/>
</dbReference>
<dbReference type="PaxDb" id="3702-AT2G42380.2"/>
<dbReference type="ProteomicsDB" id="240556">
    <molecule id="F4IN23-1"/>
</dbReference>
<dbReference type="EnsemblPlants" id="AT2G42380.1">
    <molecule id="F4IN23-2"/>
    <property type="protein sequence ID" value="AT2G42380.1"/>
    <property type="gene ID" value="AT2G42380"/>
</dbReference>
<dbReference type="EnsemblPlants" id="AT2G42380.2">
    <molecule id="F4IN23-1"/>
    <property type="protein sequence ID" value="AT2G42380.2"/>
    <property type="gene ID" value="AT2G42380"/>
</dbReference>
<dbReference type="GeneID" id="818839"/>
<dbReference type="Gramene" id="AT2G42380.1">
    <molecule id="F4IN23-2"/>
    <property type="protein sequence ID" value="AT2G42380.1"/>
    <property type="gene ID" value="AT2G42380"/>
</dbReference>
<dbReference type="Gramene" id="AT2G42380.2">
    <molecule id="F4IN23-1"/>
    <property type="protein sequence ID" value="AT2G42380.2"/>
    <property type="gene ID" value="AT2G42380"/>
</dbReference>
<dbReference type="KEGG" id="ath:AT2G42380"/>
<dbReference type="Araport" id="AT2G42380"/>
<dbReference type="TAIR" id="AT2G42380">
    <property type="gene designation" value="BZIP34"/>
</dbReference>
<dbReference type="eggNOG" id="ENOG502QQW5">
    <property type="taxonomic scope" value="Eukaryota"/>
</dbReference>
<dbReference type="HOGENOM" id="CLU_059253_1_0_1"/>
<dbReference type="InParanoid" id="F4IN23"/>
<dbReference type="OMA" id="KNDEVHS"/>
<dbReference type="PRO" id="PR:F4IN23"/>
<dbReference type="Proteomes" id="UP000006548">
    <property type="component" value="Chromosome 2"/>
</dbReference>
<dbReference type="ExpressionAtlas" id="F4IN23">
    <property type="expression patterns" value="baseline and differential"/>
</dbReference>
<dbReference type="GO" id="GO:0005634">
    <property type="term" value="C:nucleus"/>
    <property type="evidence" value="ECO:0000314"/>
    <property type="project" value="TAIR"/>
</dbReference>
<dbReference type="GO" id="GO:0003677">
    <property type="term" value="F:DNA binding"/>
    <property type="evidence" value="ECO:0000314"/>
    <property type="project" value="TAIR"/>
</dbReference>
<dbReference type="GO" id="GO:0003700">
    <property type="term" value="F:DNA-binding transcription factor activity"/>
    <property type="evidence" value="ECO:0000250"/>
    <property type="project" value="TAIR"/>
</dbReference>
<dbReference type="GO" id="GO:0009555">
    <property type="term" value="P:pollen development"/>
    <property type="evidence" value="ECO:0000315"/>
    <property type="project" value="TAIR"/>
</dbReference>
<dbReference type="GO" id="GO:0045893">
    <property type="term" value="P:positive regulation of DNA-templated transcription"/>
    <property type="evidence" value="ECO:0000314"/>
    <property type="project" value="TAIR"/>
</dbReference>
<dbReference type="CDD" id="cd14703">
    <property type="entry name" value="bZIP_plant_RF2"/>
    <property type="match status" value="1"/>
</dbReference>
<dbReference type="FunFam" id="1.20.5.170:FF:000057">
    <property type="entry name" value="Basic leucine zipper 61"/>
    <property type="match status" value="1"/>
</dbReference>
<dbReference type="Gene3D" id="1.20.5.170">
    <property type="match status" value="1"/>
</dbReference>
<dbReference type="InterPro" id="IPR004827">
    <property type="entry name" value="bZIP"/>
</dbReference>
<dbReference type="InterPro" id="IPR044759">
    <property type="entry name" value="bZIP_RF2"/>
</dbReference>
<dbReference type="InterPro" id="IPR046347">
    <property type="entry name" value="bZIP_sf"/>
</dbReference>
<dbReference type="InterPro" id="IPR052483">
    <property type="entry name" value="bZIP_transcription_regulators"/>
</dbReference>
<dbReference type="PANTHER" id="PTHR46391">
    <property type="entry name" value="BASIC LEUCINE ZIPPER 34"/>
    <property type="match status" value="1"/>
</dbReference>
<dbReference type="PANTHER" id="PTHR46391:SF26">
    <property type="entry name" value="BASIC LEUCINE ZIPPER 34"/>
    <property type="match status" value="1"/>
</dbReference>
<dbReference type="Pfam" id="PF07716">
    <property type="entry name" value="bZIP_2"/>
    <property type="match status" value="1"/>
</dbReference>
<dbReference type="SMART" id="SM00338">
    <property type="entry name" value="BRLZ"/>
    <property type="match status" value="1"/>
</dbReference>
<dbReference type="SUPFAM" id="SSF57959">
    <property type="entry name" value="Leucine zipper domain"/>
    <property type="match status" value="1"/>
</dbReference>
<dbReference type="PROSITE" id="PS50217">
    <property type="entry name" value="BZIP"/>
    <property type="match status" value="1"/>
</dbReference>
<dbReference type="PROSITE" id="PS00036">
    <property type="entry name" value="BZIP_BASIC"/>
    <property type="match status" value="1"/>
</dbReference>
<reference key="1">
    <citation type="journal article" date="1999" name="Nature">
        <title>Sequence and analysis of chromosome 2 of the plant Arabidopsis thaliana.</title>
        <authorList>
            <person name="Lin X."/>
            <person name="Kaul S."/>
            <person name="Rounsley S.D."/>
            <person name="Shea T.P."/>
            <person name="Benito M.-I."/>
            <person name="Town C.D."/>
            <person name="Fujii C.Y."/>
            <person name="Mason T.M."/>
            <person name="Bowman C.L."/>
            <person name="Barnstead M.E."/>
            <person name="Feldblyum T.V."/>
            <person name="Buell C.R."/>
            <person name="Ketchum K.A."/>
            <person name="Lee J.J."/>
            <person name="Ronning C.M."/>
            <person name="Koo H.L."/>
            <person name="Moffat K.S."/>
            <person name="Cronin L.A."/>
            <person name="Shen M."/>
            <person name="Pai G."/>
            <person name="Van Aken S."/>
            <person name="Umayam L."/>
            <person name="Tallon L.J."/>
            <person name="Gill J.E."/>
            <person name="Adams M.D."/>
            <person name="Carrera A.J."/>
            <person name="Creasy T.H."/>
            <person name="Goodman H.M."/>
            <person name="Somerville C.R."/>
            <person name="Copenhaver G.P."/>
            <person name="Preuss D."/>
            <person name="Nierman W.C."/>
            <person name="White O."/>
            <person name="Eisen J.A."/>
            <person name="Salzberg S.L."/>
            <person name="Fraser C.M."/>
            <person name="Venter J.C."/>
        </authorList>
    </citation>
    <scope>NUCLEOTIDE SEQUENCE [LARGE SCALE GENOMIC DNA]</scope>
    <source>
        <strain>cv. Columbia</strain>
    </source>
</reference>
<reference key="2">
    <citation type="journal article" date="2017" name="Plant J.">
        <title>Araport11: a complete reannotation of the Arabidopsis thaliana reference genome.</title>
        <authorList>
            <person name="Cheng C.Y."/>
            <person name="Krishnakumar V."/>
            <person name="Chan A.P."/>
            <person name="Thibaud-Nissen F."/>
            <person name="Schobel S."/>
            <person name="Town C.D."/>
        </authorList>
    </citation>
    <scope>GENOME REANNOTATION</scope>
    <source>
        <strain>cv. Columbia</strain>
    </source>
</reference>
<reference key="3">
    <citation type="journal article" date="2003" name="Science">
        <title>Empirical analysis of transcriptional activity in the Arabidopsis genome.</title>
        <authorList>
            <person name="Yamada K."/>
            <person name="Lim J."/>
            <person name="Dale J.M."/>
            <person name="Chen H."/>
            <person name="Shinn P."/>
            <person name="Palm C.J."/>
            <person name="Southwick A.M."/>
            <person name="Wu H.C."/>
            <person name="Kim C.J."/>
            <person name="Nguyen M."/>
            <person name="Pham P.K."/>
            <person name="Cheuk R.F."/>
            <person name="Karlin-Newmann G."/>
            <person name="Liu S.X."/>
            <person name="Lam B."/>
            <person name="Sakano H."/>
            <person name="Wu T."/>
            <person name="Yu G."/>
            <person name="Miranda M."/>
            <person name="Quach H.L."/>
            <person name="Tripp M."/>
            <person name="Chang C.H."/>
            <person name="Lee J.M."/>
            <person name="Toriumi M.J."/>
            <person name="Chan M.M."/>
            <person name="Tang C.C."/>
            <person name="Onodera C.S."/>
            <person name="Deng J.M."/>
            <person name="Akiyama K."/>
            <person name="Ansari Y."/>
            <person name="Arakawa T."/>
            <person name="Banh J."/>
            <person name="Banno F."/>
            <person name="Bowser L."/>
            <person name="Brooks S.Y."/>
            <person name="Carninci P."/>
            <person name="Chao Q."/>
            <person name="Choy N."/>
            <person name="Enju A."/>
            <person name="Goldsmith A.D."/>
            <person name="Gurjal M."/>
            <person name="Hansen N.F."/>
            <person name="Hayashizaki Y."/>
            <person name="Johnson-Hopson C."/>
            <person name="Hsuan V.W."/>
            <person name="Iida K."/>
            <person name="Karnes M."/>
            <person name="Khan S."/>
            <person name="Koesema E."/>
            <person name="Ishida J."/>
            <person name="Jiang P.X."/>
            <person name="Jones T."/>
            <person name="Kawai J."/>
            <person name="Kamiya A."/>
            <person name="Meyers C."/>
            <person name="Nakajima M."/>
            <person name="Narusaka M."/>
            <person name="Seki M."/>
            <person name="Sakurai T."/>
            <person name="Satou M."/>
            <person name="Tamse R."/>
            <person name="Vaysberg M."/>
            <person name="Wallender E.K."/>
            <person name="Wong C."/>
            <person name="Yamamura Y."/>
            <person name="Yuan S."/>
            <person name="Shinozaki K."/>
            <person name="Davis R.W."/>
            <person name="Theologis A."/>
            <person name="Ecker J.R."/>
        </authorList>
    </citation>
    <scope>NUCLEOTIDE SEQUENCE [LARGE SCALE MRNA] OF 2-321 (ISOFORM 1)</scope>
    <source>
        <strain>cv. Columbia</strain>
    </source>
</reference>
<reference key="4">
    <citation type="submission" date="2001-07" db="EMBL/GenBank/DDBJ databases">
        <title>The family of bZIP transcription factors in Arabidopsis thaliana.</title>
        <authorList>
            <person name="Tiedemann J."/>
        </authorList>
    </citation>
    <scope>NUCLEOTIDE SEQUENCE [MRNA] OF 11-321 (ISOFORM 2)</scope>
    <source>
        <strain>cv. Columbia</strain>
        <tissue>Flower</tissue>
        <tissue>Silique</tissue>
    </source>
</reference>
<reference key="5">
    <citation type="journal article" date="2002" name="Trends Plant Sci.">
        <title>bZIP transcription factors in Arabidopsis.</title>
        <authorList>
            <person name="Jakoby M."/>
            <person name="Weisshaar B."/>
            <person name="Droege-Laser W."/>
            <person name="Vicente-Carbajosa J."/>
            <person name="Tiedemann J."/>
            <person name="Kroj T."/>
            <person name="Parcy F."/>
        </authorList>
    </citation>
    <scope>GENE FAMILY</scope>
    <scope>NOMENCLATURE</scope>
</reference>
<reference key="6">
    <citation type="journal article" date="2007" name="Biochem. Biophys. Res. Commun.">
        <title>A conserved proline residue in the leucine zipper region of AtbZIP34 and AtbZIP61 in Arabidopsis thaliana interferes with the formation of homodimer.</title>
        <authorList>
            <person name="Shen H."/>
            <person name="Cao K."/>
            <person name="Wang X."/>
        </authorList>
    </citation>
    <scope>FUNCTION</scope>
    <scope>INTERACTION WITH BZIP43 AND VIP1/BZIP51</scope>
    <scope>SUBCELLULAR LOCATION</scope>
    <scope>MUTAGENESIS OF PRO-230</scope>
</reference>
<reference key="7">
    <citation type="journal article" date="2009" name="Plant Mol. Biol.">
        <title>AtbZIP34 is required for Arabidopsis pollen wall patterning and the control of several metabolic pathways in developing pollen.</title>
        <authorList>
            <person name="Gibalova A."/>
            <person name="Renak D."/>
            <person name="Matczuk K."/>
            <person name="Dupl'akova N."/>
            <person name="Chab D."/>
            <person name="Twell D."/>
            <person name="Honys D."/>
        </authorList>
    </citation>
    <scope>FUNCTION</scope>
    <scope>TISSUE SPECIFICITY</scope>
    <scope>DISRUPTION PHENOTYPE</scope>
</reference>
<reference key="8">
    <citation type="journal article" date="2017" name="Plant Reprod.">
        <title>Characterization of pollen-expressed bZIP protein interactions and the role of ATbZIP18 in the male gametophyte.</title>
        <authorList>
            <person name="Gibalova A."/>
            <person name="Steinbachova L."/>
            <person name="Hafidh S."/>
            <person name="Blahova V."/>
            <person name="Gadiou Z."/>
            <person name="Michailidis C."/>
            <person name="Muller K."/>
            <person name="Pleskot R."/>
            <person name="Duplakova N."/>
            <person name="Honys D."/>
        </authorList>
    </citation>
    <scope>SUBUNIT</scope>
    <scope>INTERACTION WITH BZIP18</scope>
</reference>
<proteinExistence type="evidence at protein level"/>
<feature type="chain" id="PRO_0000430352" description="Basic leucine zipper 34">
    <location>
        <begin position="1"/>
        <end position="321"/>
    </location>
</feature>
<feature type="domain" description="bZIP" evidence="1">
    <location>
        <begin position="186"/>
        <end position="238"/>
    </location>
</feature>
<feature type="region of interest" description="Disordered" evidence="2">
    <location>
        <begin position="97"/>
        <end position="189"/>
    </location>
</feature>
<feature type="region of interest" description="Basic motif" evidence="1">
    <location>
        <begin position="188"/>
        <end position="207"/>
    </location>
</feature>
<feature type="region of interest" description="Leucine-zipper" evidence="1">
    <location>
        <begin position="214"/>
        <end position="235"/>
    </location>
</feature>
<feature type="compositionally biased region" description="Low complexity" evidence="2">
    <location>
        <begin position="110"/>
        <end position="133"/>
    </location>
</feature>
<feature type="compositionally biased region" description="Low complexity" evidence="2">
    <location>
        <begin position="145"/>
        <end position="155"/>
    </location>
</feature>
<feature type="compositionally biased region" description="Low complexity" evidence="2">
    <location>
        <begin position="172"/>
        <end position="182"/>
    </location>
</feature>
<feature type="splice variant" id="VSP_056619" description="In isoform 2." evidence="7">
    <original>RSVTSLQAEVSV</original>
    <variation>L</variation>
    <location>
        <begin position="216"/>
        <end position="227"/>
    </location>
</feature>
<feature type="mutagenesis site" description="Homodimerization and binding to G-box element." evidence="3">
    <original>P</original>
    <variation>A</variation>
    <location>
        <position position="230"/>
    </location>
</feature>
<protein>
    <recommendedName>
        <fullName evidence="6">Basic leucine zipper 34</fullName>
        <shortName evidence="6">AtbZIP34</shortName>
        <shortName>bZIP protein 34</shortName>
    </recommendedName>
</protein>
<accession>F4IN23</accession>
<accession>F4IN22</accession>
<accession>Q8S9M0</accession>
<accession>Q9SLC1</accession>